<dbReference type="EMBL" id="CH964272">
    <property type="protein sequence ID" value="EDW85183.1"/>
    <property type="molecule type" value="Genomic_DNA"/>
</dbReference>
<dbReference type="SMR" id="B4NKL1"/>
<dbReference type="STRING" id="7260.B4NKL1"/>
<dbReference type="EnsemblMetazoa" id="FBtr0245165">
    <property type="protein sequence ID" value="FBpp0243657"/>
    <property type="gene ID" value="FBgn0216520"/>
</dbReference>
<dbReference type="EnsemblMetazoa" id="XM_002074161.4">
    <property type="protein sequence ID" value="XP_002074197.1"/>
    <property type="gene ID" value="LOC6651052"/>
</dbReference>
<dbReference type="GeneID" id="6651052"/>
<dbReference type="KEGG" id="dwi:6651052"/>
<dbReference type="CTD" id="65992"/>
<dbReference type="eggNOG" id="KOG3054">
    <property type="taxonomic scope" value="Eukaryota"/>
</dbReference>
<dbReference type="HOGENOM" id="CLU_059562_1_0_1"/>
<dbReference type="OMA" id="EFTRECN"/>
<dbReference type="OrthoDB" id="2285710at2759"/>
<dbReference type="PhylomeDB" id="B4NKL1"/>
<dbReference type="Proteomes" id="UP000007798">
    <property type="component" value="Unassembled WGS sequence"/>
</dbReference>
<dbReference type="GO" id="GO:0005789">
    <property type="term" value="C:endoplasmic reticulum membrane"/>
    <property type="evidence" value="ECO:0007669"/>
    <property type="project" value="UniProtKB-SubCell"/>
</dbReference>
<dbReference type="GO" id="GO:0044389">
    <property type="term" value="F:ubiquitin-like protein ligase binding"/>
    <property type="evidence" value="ECO:0007669"/>
    <property type="project" value="TreeGrafter"/>
</dbReference>
<dbReference type="FunFam" id="1.10.10.10:FF:000143">
    <property type="entry name" value="DDRGK domain-containing protein 1"/>
    <property type="match status" value="1"/>
</dbReference>
<dbReference type="Gene3D" id="1.10.10.10">
    <property type="entry name" value="Winged helix-like DNA-binding domain superfamily/Winged helix DNA-binding domain"/>
    <property type="match status" value="1"/>
</dbReference>
<dbReference type="InterPro" id="IPR019153">
    <property type="entry name" value="DDRGK_dom-contain"/>
</dbReference>
<dbReference type="InterPro" id="IPR050899">
    <property type="entry name" value="DDRGK_domain-containing"/>
</dbReference>
<dbReference type="InterPro" id="IPR036388">
    <property type="entry name" value="WH-like_DNA-bd_sf"/>
</dbReference>
<dbReference type="InterPro" id="IPR036390">
    <property type="entry name" value="WH_DNA-bd_sf"/>
</dbReference>
<dbReference type="PANTHER" id="PTHR48176">
    <property type="entry name" value="DDRGK DOMAIN-CONTAINING PROTEIN 1"/>
    <property type="match status" value="1"/>
</dbReference>
<dbReference type="PANTHER" id="PTHR48176:SF1">
    <property type="entry name" value="DDRGK DOMAIN-CONTAINING PROTEIN 1"/>
    <property type="match status" value="1"/>
</dbReference>
<dbReference type="Pfam" id="PF09756">
    <property type="entry name" value="DDRGK"/>
    <property type="match status" value="1"/>
</dbReference>
<dbReference type="SMART" id="SM01128">
    <property type="entry name" value="DDRGK"/>
    <property type="match status" value="1"/>
</dbReference>
<dbReference type="SUPFAM" id="SSF46785">
    <property type="entry name" value="Winged helix' DNA-binding domain"/>
    <property type="match status" value="1"/>
</dbReference>
<keyword id="KW-0256">Endoplasmic reticulum</keyword>
<keyword id="KW-0472">Membrane</keyword>
<keyword id="KW-1185">Reference proteome</keyword>
<keyword id="KW-0812">Transmembrane</keyword>
<keyword id="KW-1133">Transmembrane helix</keyword>
<keyword id="KW-0833">Ubl conjugation pathway</keyword>
<proteinExistence type="inferred from homology"/>
<feature type="chain" id="PRO_0000391866" description="DDRGK domain-containing protein 1">
    <location>
        <begin position="1"/>
        <end position="307"/>
    </location>
</feature>
<feature type="topological domain" description="Lumenal" evidence="5">
    <location>
        <begin position="1"/>
        <end position="2"/>
    </location>
</feature>
<feature type="transmembrane region" description="Helical" evidence="3">
    <location>
        <begin position="3"/>
        <end position="23"/>
    </location>
</feature>
<feature type="topological domain" description="Cytoplasmic" evidence="5">
    <location>
        <begin position="24"/>
        <end position="307"/>
    </location>
</feature>
<feature type="region of interest" description="Disordered" evidence="4">
    <location>
        <begin position="32"/>
        <end position="162"/>
    </location>
</feature>
<feature type="compositionally biased region" description="Low complexity" evidence="4">
    <location>
        <begin position="32"/>
        <end position="43"/>
    </location>
</feature>
<feature type="compositionally biased region" description="Low complexity" evidence="4">
    <location>
        <begin position="54"/>
        <end position="83"/>
    </location>
</feature>
<feature type="compositionally biased region" description="Basic and acidic residues" evidence="4">
    <location>
        <begin position="117"/>
        <end position="162"/>
    </location>
</feature>
<comment type="function">
    <text evidence="1 2">Substrate adapter for ufmylation, the covalent attachment of the ubiquitin-like modifier UFM1 to substrate proteins (By similarity). Required for ufmylation of Atg9; protects the nervous system during aging, possibly by stabilizing Atg9 and supporting its function (By similarity).</text>
</comment>
<comment type="subunit">
    <text evidence="2">Interacts with Atg9; the interaction is transient.</text>
</comment>
<comment type="subcellular location">
    <subcellularLocation>
        <location evidence="1">Endoplasmic reticulum membrane</location>
        <topology evidence="3">Single-pass membrane protein</topology>
    </subcellularLocation>
</comment>
<comment type="similarity">
    <text evidence="5">Belongs to the DDRGK1 family.</text>
</comment>
<reference key="1">
    <citation type="journal article" date="2007" name="Nature">
        <title>Evolution of genes and genomes on the Drosophila phylogeny.</title>
        <authorList>
            <consortium name="Drosophila 12 genomes consortium"/>
        </authorList>
    </citation>
    <scope>NUCLEOTIDE SEQUENCE [LARGE SCALE GENOMIC DNA]</scope>
    <source>
        <strain>Tucson 14030-0811.24</strain>
    </source>
</reference>
<sequence length="307" mass="34054">MDLILLVGIAVALLVILATLYFLQNKNKAAGEAKPAAAAPRRGVPQRAQEGVPRRAQIARNQRNRLQQNAPAPAPEAVAPAAAGDSDDDEENVGADGARLPQGAVLNEKMGAKKRAKMEAKEQKRLQREHELQEREKRKVKEAKEDAERKQQEEVEAEAERKKLDAERLAKEERERKEHEEYLKMKAAFNVEEEGFEEGDADDQESLLADFIQYIKDNKVVLLEDLAVAFKLKTQQAIERIQELQANGSLTGVIDDRGKFIYISQEELAAVAKFIKQRGRVSIAELAESSNNLINLTPVQSAAGGDS</sequence>
<organism>
    <name type="scientific">Drosophila willistoni</name>
    <name type="common">Fruit fly</name>
    <dbReference type="NCBI Taxonomy" id="7260"/>
    <lineage>
        <taxon>Eukaryota</taxon>
        <taxon>Metazoa</taxon>
        <taxon>Ecdysozoa</taxon>
        <taxon>Arthropoda</taxon>
        <taxon>Hexapoda</taxon>
        <taxon>Insecta</taxon>
        <taxon>Pterygota</taxon>
        <taxon>Neoptera</taxon>
        <taxon>Endopterygota</taxon>
        <taxon>Diptera</taxon>
        <taxon>Brachycera</taxon>
        <taxon>Muscomorpha</taxon>
        <taxon>Ephydroidea</taxon>
        <taxon>Drosophilidae</taxon>
        <taxon>Drosophila</taxon>
        <taxon>Sophophora</taxon>
    </lineage>
</organism>
<accession>B4NKL1</accession>
<evidence type="ECO:0000250" key="1">
    <source>
        <dbReference type="UniProtKB" id="Q96HY6"/>
    </source>
</evidence>
<evidence type="ECO:0000250" key="2">
    <source>
        <dbReference type="UniProtKB" id="Q9VDD1"/>
    </source>
</evidence>
<evidence type="ECO:0000255" key="3"/>
<evidence type="ECO:0000256" key="4">
    <source>
        <dbReference type="SAM" id="MobiDB-lite"/>
    </source>
</evidence>
<evidence type="ECO:0000305" key="5"/>
<protein>
    <recommendedName>
        <fullName>DDRGK domain-containing protein 1</fullName>
    </recommendedName>
</protein>
<gene>
    <name evidence="2" type="primary">Ddrgk1</name>
    <name type="ORF">GK14514</name>
</gene>
<name>DDRGK_DROWI</name>